<accession>Q2R0J4</accession>
<name>TBT2_ORYSJ</name>
<protein>
    <recommendedName>
        <fullName evidence="5">Tryptamine benzoyltransferase 2</fullName>
        <shortName evidence="4">OsTBT2</shortName>
        <ecNumber evidence="5">2.3.1.-</ecNumber>
    </recommendedName>
</protein>
<dbReference type="EC" id="2.3.1.-" evidence="5"/>
<dbReference type="EMBL" id="DP000010">
    <property type="protein sequence ID" value="ABA95035.1"/>
    <property type="molecule type" value="Genomic_DNA"/>
</dbReference>
<dbReference type="EMBL" id="AP008217">
    <property type="protein sequence ID" value="BAF28721.1"/>
    <property type="molecule type" value="Genomic_DNA"/>
</dbReference>
<dbReference type="EMBL" id="AP014967">
    <property type="protein sequence ID" value="BAT15024.1"/>
    <property type="molecule type" value="Genomic_DNA"/>
</dbReference>
<dbReference type="EMBL" id="AK061327">
    <property type="protein sequence ID" value="BAG87858.1"/>
    <property type="molecule type" value="mRNA"/>
</dbReference>
<dbReference type="RefSeq" id="XP_015615816.1">
    <property type="nucleotide sequence ID" value="XM_015760330.1"/>
</dbReference>
<dbReference type="SMR" id="Q2R0J4"/>
<dbReference type="FunCoup" id="Q2R0J4">
    <property type="interactions" value="1"/>
</dbReference>
<dbReference type="STRING" id="39947.Q2R0J4"/>
<dbReference type="PaxDb" id="39947-Q2R0J4"/>
<dbReference type="EnsemblPlants" id="Os11t0643100-01">
    <property type="protein sequence ID" value="Os11t0643100-01"/>
    <property type="gene ID" value="Os11g0643100"/>
</dbReference>
<dbReference type="Gramene" id="Os11t0643100-01">
    <property type="protein sequence ID" value="Os11t0643100-01"/>
    <property type="gene ID" value="Os11g0643100"/>
</dbReference>
<dbReference type="KEGG" id="dosa:Os11g0643100"/>
<dbReference type="eggNOG" id="ENOG502QVP8">
    <property type="taxonomic scope" value="Eukaryota"/>
</dbReference>
<dbReference type="HOGENOM" id="CLU_014546_6_0_1"/>
<dbReference type="InParanoid" id="Q2R0J4"/>
<dbReference type="OMA" id="VPSPCLD"/>
<dbReference type="OrthoDB" id="1862401at2759"/>
<dbReference type="SABIO-RK" id="Q2R0J4"/>
<dbReference type="Proteomes" id="UP000000763">
    <property type="component" value="Chromosome 11"/>
</dbReference>
<dbReference type="Proteomes" id="UP000059680">
    <property type="component" value="Chromosome 11"/>
</dbReference>
<dbReference type="ExpressionAtlas" id="Q2R0J4">
    <property type="expression patterns" value="baseline and differential"/>
</dbReference>
<dbReference type="GO" id="GO:0016747">
    <property type="term" value="F:acyltransferase activity, transferring groups other than amino-acyl groups"/>
    <property type="evidence" value="ECO:0000318"/>
    <property type="project" value="GO_Central"/>
</dbReference>
<dbReference type="GO" id="GO:0050734">
    <property type="term" value="F:hydroxycinnamoyltransferase activity"/>
    <property type="evidence" value="ECO:0000314"/>
    <property type="project" value="UniProtKB"/>
</dbReference>
<dbReference type="FunFam" id="3.30.559.10:FF:000008">
    <property type="entry name" value="Tryptamine hydroxycinnamoyl transferase"/>
    <property type="match status" value="1"/>
</dbReference>
<dbReference type="FunFam" id="3.30.559.10:FF:000014">
    <property type="entry name" value="Tryptamine hydroxycinnamoyl transferase"/>
    <property type="match status" value="1"/>
</dbReference>
<dbReference type="Gene3D" id="3.30.559.10">
    <property type="entry name" value="Chloramphenicol acetyltransferase-like domain"/>
    <property type="match status" value="2"/>
</dbReference>
<dbReference type="InterPro" id="IPR023213">
    <property type="entry name" value="CAT-like_dom_sf"/>
</dbReference>
<dbReference type="InterPro" id="IPR050317">
    <property type="entry name" value="Plant_Fungal_Acyltransferase"/>
</dbReference>
<dbReference type="PANTHER" id="PTHR31642">
    <property type="entry name" value="TRICHOTHECENE 3-O-ACETYLTRANSFERASE"/>
    <property type="match status" value="1"/>
</dbReference>
<dbReference type="PANTHER" id="PTHR31642:SF331">
    <property type="entry name" value="TRYPTAMINE BENZOYLTRANSFERASE 2"/>
    <property type="match status" value="1"/>
</dbReference>
<dbReference type="Pfam" id="PF02458">
    <property type="entry name" value="Transferase"/>
    <property type="match status" value="1"/>
</dbReference>
<feature type="chain" id="PRO_0000437769" description="Tryptamine benzoyltransferase 2">
    <location>
        <begin position="1"/>
        <end position="448"/>
    </location>
</feature>
<feature type="region of interest" description="Disordered" evidence="2">
    <location>
        <begin position="1"/>
        <end position="20"/>
    </location>
</feature>
<feature type="active site" description="Proton acceptor" evidence="1">
    <location>
        <position position="155"/>
    </location>
</feature>
<feature type="active site" description="Proton acceptor" evidence="1">
    <location>
        <position position="386"/>
    </location>
</feature>
<sequence length="448" mass="48023">MEITSSAMLKPAPTPTPHPLAGEKVPLTAFDRAAFDVFVPMVFAYRAPAPSSEAVKEGLRMAVAAYPLAAGRLAVDVAADGQGRRRRRRVLHVNDEGALVLDATVEADLDAVLAANVATDLYPAPPEHSFGAAVLQVQLTRFRCSGLVVGLIVHHHVFDGHSTSAFCTTWARAVRDGEAFSVPSPCLDRAITSVPRSPPAPVFDHRSIEFKVGNKSSDSSGAAAAAVEKITNIGVRFTAKFVAELKARVGGRCSTFECVLAHAWKKMTAARGLKPEEFTRVRVAVNCRRRANPPAPADLFGNMVLWAFPRLQVRRLLSASYRDVVGAIRAAVARVDGEYIQSFVDYVEVADARGEELAATAAEPGETLCPDLEVDSWLGFRFHEMDLGTGPPAAVLSPDLPIEGLMILVPVGGDGGGVDLFVALADDRAQVFEQICYSLEEHAIPSHL</sequence>
<evidence type="ECO:0000250" key="1">
    <source>
        <dbReference type="UniProtKB" id="Q8W1W9"/>
    </source>
</evidence>
<evidence type="ECO:0000256" key="2">
    <source>
        <dbReference type="SAM" id="MobiDB-lite"/>
    </source>
</evidence>
<evidence type="ECO:0000269" key="3">
    <source>
    </source>
</evidence>
<evidence type="ECO:0000303" key="4">
    <source>
    </source>
</evidence>
<evidence type="ECO:0000305" key="5"/>
<evidence type="ECO:0000312" key="6">
    <source>
        <dbReference type="EMBL" id="ABA95035.1"/>
    </source>
</evidence>
<evidence type="ECO:0000312" key="7">
    <source>
        <dbReference type="EMBL" id="BAT15024.1"/>
    </source>
</evidence>
<organism>
    <name type="scientific">Oryza sativa subsp. japonica</name>
    <name type="common">Rice</name>
    <dbReference type="NCBI Taxonomy" id="39947"/>
    <lineage>
        <taxon>Eukaryota</taxon>
        <taxon>Viridiplantae</taxon>
        <taxon>Streptophyta</taxon>
        <taxon>Embryophyta</taxon>
        <taxon>Tracheophyta</taxon>
        <taxon>Spermatophyta</taxon>
        <taxon>Magnoliopsida</taxon>
        <taxon>Liliopsida</taxon>
        <taxon>Poales</taxon>
        <taxon>Poaceae</taxon>
        <taxon>BOP clade</taxon>
        <taxon>Oryzoideae</taxon>
        <taxon>Oryzeae</taxon>
        <taxon>Oryzinae</taxon>
        <taxon>Oryza</taxon>
        <taxon>Oryza sativa</taxon>
    </lineage>
</organism>
<reference key="1">
    <citation type="journal article" date="2005" name="BMC Biol.">
        <title>The sequence of rice chromosomes 11 and 12, rich in disease resistance genes and recent gene duplications.</title>
        <authorList>
            <consortium name="The rice chromosomes 11 and 12 sequencing consortia"/>
        </authorList>
    </citation>
    <scope>NUCLEOTIDE SEQUENCE [LARGE SCALE GENOMIC DNA]</scope>
    <source>
        <strain>cv. Nipponbare</strain>
    </source>
</reference>
<reference key="2">
    <citation type="journal article" date="2005" name="Nature">
        <title>The map-based sequence of the rice genome.</title>
        <authorList>
            <consortium name="International rice genome sequencing project (IRGSP)"/>
        </authorList>
    </citation>
    <scope>NUCLEOTIDE SEQUENCE [LARGE SCALE GENOMIC DNA]</scope>
    <source>
        <strain>cv. Nipponbare</strain>
    </source>
</reference>
<reference key="3">
    <citation type="journal article" date="2008" name="Nucleic Acids Res.">
        <title>The rice annotation project database (RAP-DB): 2008 update.</title>
        <authorList>
            <consortium name="The rice annotation project (RAP)"/>
        </authorList>
    </citation>
    <scope>GENOME REANNOTATION</scope>
    <source>
        <strain>cv. Nipponbare</strain>
    </source>
</reference>
<reference key="4">
    <citation type="journal article" date="2013" name="Rice">
        <title>Improvement of the Oryza sativa Nipponbare reference genome using next generation sequence and optical map data.</title>
        <authorList>
            <person name="Kawahara Y."/>
            <person name="de la Bastide M."/>
            <person name="Hamilton J.P."/>
            <person name="Kanamori H."/>
            <person name="McCombie W.R."/>
            <person name="Ouyang S."/>
            <person name="Schwartz D.C."/>
            <person name="Tanaka T."/>
            <person name="Wu J."/>
            <person name="Zhou S."/>
            <person name="Childs K.L."/>
            <person name="Davidson R.M."/>
            <person name="Lin H."/>
            <person name="Quesada-Ocampo L."/>
            <person name="Vaillancourt B."/>
            <person name="Sakai H."/>
            <person name="Lee S.S."/>
            <person name="Kim J."/>
            <person name="Numa H."/>
            <person name="Itoh T."/>
            <person name="Buell C.R."/>
            <person name="Matsumoto T."/>
        </authorList>
    </citation>
    <scope>GENOME REANNOTATION</scope>
    <source>
        <strain>cv. Nipponbare</strain>
    </source>
</reference>
<reference key="5">
    <citation type="journal article" date="2003" name="Science">
        <title>Collection, mapping, and annotation of over 28,000 cDNA clones from japonica rice.</title>
        <authorList>
            <consortium name="The rice full-length cDNA consortium"/>
        </authorList>
    </citation>
    <scope>NUCLEOTIDE SEQUENCE [LARGE SCALE MRNA]</scope>
    <source>
        <strain>cv. Nipponbare</strain>
    </source>
</reference>
<reference key="6">
    <citation type="journal article" date="2016" name="Plant Cell">
        <title>Evolutionarily distinct BAHD N-acyltransferases are responsible for natural variation of aromatic amine conjugates in rice.</title>
        <authorList>
            <person name="Peng M."/>
            <person name="Gao Y."/>
            <person name="Chen W."/>
            <person name="Wang W."/>
            <person name="Shen S."/>
            <person name="Shi J."/>
            <person name="Wang C."/>
            <person name="Zhang Y."/>
            <person name="Zou L."/>
            <person name="Wang S."/>
            <person name="Wan J."/>
            <person name="Liu X."/>
            <person name="Gong L."/>
            <person name="Luo J."/>
        </authorList>
    </citation>
    <scope>FUNCTION</scope>
    <scope>BIOPHYSICOCHEMICAL PROPERTIES</scope>
</reference>
<gene>
    <name evidence="4" type="primary">TBT2</name>
    <name evidence="7" type="ordered locus">Os11g0643100</name>
    <name evidence="6" type="ordered locus">LOC_Os11g42370</name>
</gene>
<proteinExistence type="evidence at protein level"/>
<keyword id="KW-0012">Acyltransferase</keyword>
<keyword id="KW-1185">Reference proteome</keyword>
<keyword id="KW-0808">Transferase</keyword>
<comment type="function">
    <text evidence="3">Hydroxycinnamoyl transferase that catalyzes the transfer of an acyl from benzoyl-CoA to tryptamine, to produce benzoyl tryptamine. Serotonin and tyramine serve as acyl acceptors in vitro. Specific for benzoyl-CoA as acyl donor. Has no activity with p-coumaroyl-CoA, caffeoyl-CoA, or feruloyl-CoA as acyl donors.</text>
</comment>
<comment type="biophysicochemical properties">
    <kinetics>
        <KM evidence="3">81.3 uM for benzoyl-CoA</KM>
        <KM evidence="3">45.4 uM for tryptamine</KM>
        <KM evidence="3">37.5 uM for serotonin</KM>
        <KM evidence="3">114.3 uM for tyramine</KM>
    </kinetics>
</comment>
<comment type="similarity">
    <text evidence="5">Belongs to the plant acyltransferase family.</text>
</comment>